<protein>
    <recommendedName>
        <fullName evidence="1">Holliday junction branch migration complex subunit RuvA</fullName>
    </recommendedName>
</protein>
<reference key="1">
    <citation type="submission" date="2008-06" db="EMBL/GenBank/DDBJ databases">
        <title>Lactobacillus casei BL23 complete genome sequence.</title>
        <authorList>
            <person name="Maze A."/>
            <person name="Boel G."/>
            <person name="Bourand A."/>
            <person name="Loux V."/>
            <person name="Gibrat J.F."/>
            <person name="Zuniga M."/>
            <person name="Hartke A."/>
            <person name="Deutscher J."/>
        </authorList>
    </citation>
    <scope>NUCLEOTIDE SEQUENCE [LARGE SCALE GENOMIC DNA]</scope>
    <source>
        <strain>BL23</strain>
    </source>
</reference>
<comment type="function">
    <text evidence="1">The RuvA-RuvB-RuvC complex processes Holliday junction (HJ) DNA during genetic recombination and DNA repair, while the RuvA-RuvB complex plays an important role in the rescue of blocked DNA replication forks via replication fork reversal (RFR). RuvA specifically binds to HJ cruciform DNA, conferring on it an open structure. The RuvB hexamer acts as an ATP-dependent pump, pulling dsDNA into and through the RuvAB complex. HJ branch migration allows RuvC to scan DNA until it finds its consensus sequence, where it cleaves and resolves the cruciform DNA.</text>
</comment>
<comment type="subunit">
    <text evidence="1">Homotetramer. Forms an RuvA(8)-RuvB(12)-Holliday junction (HJ) complex. HJ DNA is sandwiched between 2 RuvA tetramers; dsDNA enters through RuvA and exits via RuvB. An RuvB hexamer assembles on each DNA strand where it exits the tetramer. Each RuvB hexamer is contacted by two RuvA subunits (via domain III) on 2 adjacent RuvB subunits; this complex drives branch migration. In the full resolvosome a probable DNA-RuvA(4)-RuvB(12)-RuvC(2) complex forms which resolves the HJ.</text>
</comment>
<comment type="subcellular location">
    <subcellularLocation>
        <location evidence="1">Cytoplasm</location>
    </subcellularLocation>
</comment>
<comment type="domain">
    <text evidence="1">Has three domains with a flexible linker between the domains II and III and assumes an 'L' shape. Domain III is highly mobile and contacts RuvB.</text>
</comment>
<comment type="similarity">
    <text evidence="1">Belongs to the RuvA family.</text>
</comment>
<name>RUVA_LACCB</name>
<feature type="chain" id="PRO_1000090328" description="Holliday junction branch migration complex subunit RuvA">
    <location>
        <begin position="1"/>
        <end position="198"/>
    </location>
</feature>
<feature type="region of interest" description="Domain I" evidence="1">
    <location>
        <begin position="1"/>
        <end position="61"/>
    </location>
</feature>
<feature type="region of interest" description="Domain II" evidence="1">
    <location>
        <begin position="62"/>
        <end position="140"/>
    </location>
</feature>
<feature type="region of interest" description="Flexible linker" evidence="1">
    <location>
        <begin position="141"/>
        <end position="145"/>
    </location>
</feature>
<feature type="region of interest" description="Domain III" evidence="1">
    <location>
        <begin position="146"/>
        <end position="198"/>
    </location>
</feature>
<proteinExistence type="inferred from homology"/>
<gene>
    <name evidence="1" type="primary">ruvA</name>
    <name type="ordered locus">LCABL_08330</name>
</gene>
<dbReference type="EMBL" id="FM177140">
    <property type="protein sequence ID" value="CAQ65956.1"/>
    <property type="molecule type" value="Genomic_DNA"/>
</dbReference>
<dbReference type="SMR" id="B3WC55"/>
<dbReference type="KEGG" id="lcb:LCABL_08330"/>
<dbReference type="HOGENOM" id="CLU_087936_1_0_9"/>
<dbReference type="GO" id="GO:0005737">
    <property type="term" value="C:cytoplasm"/>
    <property type="evidence" value="ECO:0007669"/>
    <property type="project" value="UniProtKB-SubCell"/>
</dbReference>
<dbReference type="GO" id="GO:0009379">
    <property type="term" value="C:Holliday junction helicase complex"/>
    <property type="evidence" value="ECO:0007669"/>
    <property type="project" value="InterPro"/>
</dbReference>
<dbReference type="GO" id="GO:0048476">
    <property type="term" value="C:Holliday junction resolvase complex"/>
    <property type="evidence" value="ECO:0007669"/>
    <property type="project" value="UniProtKB-UniRule"/>
</dbReference>
<dbReference type="GO" id="GO:0005524">
    <property type="term" value="F:ATP binding"/>
    <property type="evidence" value="ECO:0007669"/>
    <property type="project" value="InterPro"/>
</dbReference>
<dbReference type="GO" id="GO:0000400">
    <property type="term" value="F:four-way junction DNA binding"/>
    <property type="evidence" value="ECO:0007669"/>
    <property type="project" value="UniProtKB-UniRule"/>
</dbReference>
<dbReference type="GO" id="GO:0009378">
    <property type="term" value="F:four-way junction helicase activity"/>
    <property type="evidence" value="ECO:0007669"/>
    <property type="project" value="InterPro"/>
</dbReference>
<dbReference type="GO" id="GO:0006310">
    <property type="term" value="P:DNA recombination"/>
    <property type="evidence" value="ECO:0007669"/>
    <property type="project" value="UniProtKB-UniRule"/>
</dbReference>
<dbReference type="GO" id="GO:0006281">
    <property type="term" value="P:DNA repair"/>
    <property type="evidence" value="ECO:0007669"/>
    <property type="project" value="UniProtKB-UniRule"/>
</dbReference>
<dbReference type="Gene3D" id="1.10.150.20">
    <property type="entry name" value="5' to 3' exonuclease, C-terminal subdomain"/>
    <property type="match status" value="1"/>
</dbReference>
<dbReference type="Gene3D" id="2.40.50.140">
    <property type="entry name" value="Nucleic acid-binding proteins"/>
    <property type="match status" value="1"/>
</dbReference>
<dbReference type="HAMAP" id="MF_00031">
    <property type="entry name" value="DNA_HJ_migration_RuvA"/>
    <property type="match status" value="1"/>
</dbReference>
<dbReference type="InterPro" id="IPR013849">
    <property type="entry name" value="DNA_helicase_Holl-junc_RuvA_I"/>
</dbReference>
<dbReference type="InterPro" id="IPR003583">
    <property type="entry name" value="Hlx-hairpin-Hlx_DNA-bd_motif"/>
</dbReference>
<dbReference type="InterPro" id="IPR012340">
    <property type="entry name" value="NA-bd_OB-fold"/>
</dbReference>
<dbReference type="InterPro" id="IPR000085">
    <property type="entry name" value="RuvA"/>
</dbReference>
<dbReference type="InterPro" id="IPR010994">
    <property type="entry name" value="RuvA_2-like"/>
</dbReference>
<dbReference type="InterPro" id="IPR011114">
    <property type="entry name" value="RuvA_C"/>
</dbReference>
<dbReference type="InterPro" id="IPR036267">
    <property type="entry name" value="RuvA_C_sf"/>
</dbReference>
<dbReference type="NCBIfam" id="TIGR00084">
    <property type="entry name" value="ruvA"/>
    <property type="match status" value="1"/>
</dbReference>
<dbReference type="Pfam" id="PF14520">
    <property type="entry name" value="HHH_5"/>
    <property type="match status" value="1"/>
</dbReference>
<dbReference type="Pfam" id="PF07499">
    <property type="entry name" value="RuvA_C"/>
    <property type="match status" value="1"/>
</dbReference>
<dbReference type="Pfam" id="PF01330">
    <property type="entry name" value="RuvA_N"/>
    <property type="match status" value="1"/>
</dbReference>
<dbReference type="SMART" id="SM00278">
    <property type="entry name" value="HhH1"/>
    <property type="match status" value="2"/>
</dbReference>
<dbReference type="SUPFAM" id="SSF46929">
    <property type="entry name" value="DNA helicase RuvA subunit, C-terminal domain"/>
    <property type="match status" value="1"/>
</dbReference>
<dbReference type="SUPFAM" id="SSF50249">
    <property type="entry name" value="Nucleic acid-binding proteins"/>
    <property type="match status" value="1"/>
</dbReference>
<dbReference type="SUPFAM" id="SSF47781">
    <property type="entry name" value="RuvA domain 2-like"/>
    <property type="match status" value="1"/>
</dbReference>
<keyword id="KW-0963">Cytoplasm</keyword>
<keyword id="KW-0227">DNA damage</keyword>
<keyword id="KW-0233">DNA recombination</keyword>
<keyword id="KW-0234">DNA repair</keyword>
<keyword id="KW-0238">DNA-binding</keyword>
<accession>B3WC55</accession>
<sequence length="198" mass="21032">MYEYFEGIIQAVTPAYIVIDVHGIGFRLLVANPYHFEAGEQKRVYVQLIIRDNDQTLYGFEGAADKRTFNQLLTVTGIGPKSALAILANVSSGGLATAIAQDDVKFLTKFPGIGKKTAAQIILDLKGKITTDGQPAAAAIAPVASDVDSELADALAALVALGYPQRTVDGLTDTLKAFSAKTTDAYLREGLRLLSGKA</sequence>
<organism>
    <name type="scientific">Lacticaseibacillus casei (strain BL23)</name>
    <name type="common">Lactobacillus casei</name>
    <dbReference type="NCBI Taxonomy" id="543734"/>
    <lineage>
        <taxon>Bacteria</taxon>
        <taxon>Bacillati</taxon>
        <taxon>Bacillota</taxon>
        <taxon>Bacilli</taxon>
        <taxon>Lactobacillales</taxon>
        <taxon>Lactobacillaceae</taxon>
        <taxon>Lacticaseibacillus</taxon>
    </lineage>
</organism>
<evidence type="ECO:0000255" key="1">
    <source>
        <dbReference type="HAMAP-Rule" id="MF_00031"/>
    </source>
</evidence>